<sequence>MSVKWEKQEGNVGKLTFEIEQEKVKEGLDRAFVKVRKTLNVPGFRKGKVPRQIFNQRFGEEALFQDALDILLPEVYSAAIDEAGIDPVDTPQVNIESMEKGETWVLTAEVTVKPEVKLGDYKGLEVEKRETELTTEELEAELKQLQERQAELVVKEDAPAENGDTVILDFEGFKDGVAFEGGQAENHSLELGSGQFIPGFEEKLVGLKAGDEADIELTFPEEYHAEDLAGQPVVFKVKLHEIKTKEVPALDDELAKDIDEEVETLDELKEKISKRLQEAKEESVAQAKQEEVIAKAVENAEVDIPHAMVHHEADHLMNHFAQDLQAQGLTPELYYQFTGQTEEAMHAQMEKDAEKRVKMNLVLEAIAEAENIEPTEEAIDEEISTLAEKYGMEKDAVRAALGDMSELKSDLKIRKAIDVLLDSAVEK</sequence>
<proteinExistence type="inferred from homology"/>
<reference key="1">
    <citation type="journal article" date="2012" name="BMC Genomics">
        <title>Comparative genomics and transcriptomics of lineages I, II, and III strains of Listeria monocytogenes.</title>
        <authorList>
            <person name="Hain T."/>
            <person name="Ghai R."/>
            <person name="Billion A."/>
            <person name="Kuenne C.T."/>
            <person name="Steinweg C."/>
            <person name="Izar B."/>
            <person name="Mohamed W."/>
            <person name="Mraheil M."/>
            <person name="Domann E."/>
            <person name="Schaffrath S."/>
            <person name="Karst U."/>
            <person name="Goesmann A."/>
            <person name="Oehm S."/>
            <person name="Puhler A."/>
            <person name="Merkl R."/>
            <person name="Vorwerk S."/>
            <person name="Glaser P."/>
            <person name="Garrido P."/>
            <person name="Rusniok C."/>
            <person name="Buchrieser C."/>
            <person name="Goebel W."/>
            <person name="Chakraborty T."/>
        </authorList>
    </citation>
    <scope>NUCLEOTIDE SEQUENCE [LARGE SCALE GENOMIC DNA]</scope>
    <source>
        <strain>CLIP80459</strain>
    </source>
</reference>
<feature type="chain" id="PRO_1000204994" description="Trigger factor">
    <location>
        <begin position="1"/>
        <end position="427"/>
    </location>
</feature>
<feature type="domain" description="PPIase FKBP-type" evidence="1">
    <location>
        <begin position="163"/>
        <end position="248"/>
    </location>
</feature>
<protein>
    <recommendedName>
        <fullName evidence="1">Trigger factor</fullName>
        <shortName evidence="1">TF</shortName>
        <ecNumber evidence="1">5.2.1.8</ecNumber>
    </recommendedName>
    <alternativeName>
        <fullName evidence="1">PPIase</fullName>
    </alternativeName>
</protein>
<evidence type="ECO:0000255" key="1">
    <source>
        <dbReference type="HAMAP-Rule" id="MF_00303"/>
    </source>
</evidence>
<dbReference type="EC" id="5.2.1.8" evidence="1"/>
<dbReference type="EMBL" id="FM242711">
    <property type="protein sequence ID" value="CAS05041.1"/>
    <property type="molecule type" value="Genomic_DNA"/>
</dbReference>
<dbReference type="RefSeq" id="WP_003723884.1">
    <property type="nucleotide sequence ID" value="NC_012488.1"/>
</dbReference>
<dbReference type="SMR" id="C1L2H5"/>
<dbReference type="KEGG" id="lmc:Lm4b_01277"/>
<dbReference type="HOGENOM" id="CLU_033058_3_2_9"/>
<dbReference type="GO" id="GO:0005737">
    <property type="term" value="C:cytoplasm"/>
    <property type="evidence" value="ECO:0007669"/>
    <property type="project" value="UniProtKB-SubCell"/>
</dbReference>
<dbReference type="GO" id="GO:0003755">
    <property type="term" value="F:peptidyl-prolyl cis-trans isomerase activity"/>
    <property type="evidence" value="ECO:0007669"/>
    <property type="project" value="UniProtKB-UniRule"/>
</dbReference>
<dbReference type="GO" id="GO:0044183">
    <property type="term" value="F:protein folding chaperone"/>
    <property type="evidence" value="ECO:0007669"/>
    <property type="project" value="TreeGrafter"/>
</dbReference>
<dbReference type="GO" id="GO:0043022">
    <property type="term" value="F:ribosome binding"/>
    <property type="evidence" value="ECO:0007669"/>
    <property type="project" value="TreeGrafter"/>
</dbReference>
<dbReference type="GO" id="GO:0051083">
    <property type="term" value="P:'de novo' cotranslational protein folding"/>
    <property type="evidence" value="ECO:0007669"/>
    <property type="project" value="TreeGrafter"/>
</dbReference>
<dbReference type="GO" id="GO:0051301">
    <property type="term" value="P:cell division"/>
    <property type="evidence" value="ECO:0007669"/>
    <property type="project" value="UniProtKB-KW"/>
</dbReference>
<dbReference type="GO" id="GO:0061077">
    <property type="term" value="P:chaperone-mediated protein folding"/>
    <property type="evidence" value="ECO:0007669"/>
    <property type="project" value="TreeGrafter"/>
</dbReference>
<dbReference type="GO" id="GO:0015031">
    <property type="term" value="P:protein transport"/>
    <property type="evidence" value="ECO:0007669"/>
    <property type="project" value="UniProtKB-UniRule"/>
</dbReference>
<dbReference type="GO" id="GO:0043335">
    <property type="term" value="P:protein unfolding"/>
    <property type="evidence" value="ECO:0007669"/>
    <property type="project" value="TreeGrafter"/>
</dbReference>
<dbReference type="FunFam" id="3.10.50.40:FF:000001">
    <property type="entry name" value="Trigger factor"/>
    <property type="match status" value="1"/>
</dbReference>
<dbReference type="FunFam" id="3.30.70.1050:FF:000002">
    <property type="entry name" value="Trigger factor"/>
    <property type="match status" value="1"/>
</dbReference>
<dbReference type="Gene3D" id="3.10.50.40">
    <property type="match status" value="1"/>
</dbReference>
<dbReference type="Gene3D" id="3.30.70.1050">
    <property type="entry name" value="Trigger factor ribosome-binding domain"/>
    <property type="match status" value="1"/>
</dbReference>
<dbReference type="Gene3D" id="1.10.3120.10">
    <property type="entry name" value="Trigger factor, C-terminal domain"/>
    <property type="match status" value="1"/>
</dbReference>
<dbReference type="HAMAP" id="MF_00303">
    <property type="entry name" value="Trigger_factor_Tig"/>
    <property type="match status" value="1"/>
</dbReference>
<dbReference type="InterPro" id="IPR046357">
    <property type="entry name" value="PPIase_dom_sf"/>
</dbReference>
<dbReference type="InterPro" id="IPR001179">
    <property type="entry name" value="PPIase_FKBP_dom"/>
</dbReference>
<dbReference type="InterPro" id="IPR005215">
    <property type="entry name" value="Trig_fac"/>
</dbReference>
<dbReference type="InterPro" id="IPR008880">
    <property type="entry name" value="Trigger_fac_C"/>
</dbReference>
<dbReference type="InterPro" id="IPR037041">
    <property type="entry name" value="Trigger_fac_C_sf"/>
</dbReference>
<dbReference type="InterPro" id="IPR008881">
    <property type="entry name" value="Trigger_fac_ribosome-bd_bac"/>
</dbReference>
<dbReference type="InterPro" id="IPR036611">
    <property type="entry name" value="Trigger_fac_ribosome-bd_sf"/>
</dbReference>
<dbReference type="InterPro" id="IPR027304">
    <property type="entry name" value="Trigger_fact/SurA_dom_sf"/>
</dbReference>
<dbReference type="NCBIfam" id="TIGR00115">
    <property type="entry name" value="tig"/>
    <property type="match status" value="1"/>
</dbReference>
<dbReference type="PANTHER" id="PTHR30560">
    <property type="entry name" value="TRIGGER FACTOR CHAPERONE AND PEPTIDYL-PROLYL CIS/TRANS ISOMERASE"/>
    <property type="match status" value="1"/>
</dbReference>
<dbReference type="PANTHER" id="PTHR30560:SF3">
    <property type="entry name" value="TRIGGER FACTOR-LIKE PROTEIN TIG, CHLOROPLASTIC"/>
    <property type="match status" value="1"/>
</dbReference>
<dbReference type="Pfam" id="PF00254">
    <property type="entry name" value="FKBP_C"/>
    <property type="match status" value="1"/>
</dbReference>
<dbReference type="Pfam" id="PF05698">
    <property type="entry name" value="Trigger_C"/>
    <property type="match status" value="1"/>
</dbReference>
<dbReference type="Pfam" id="PF05697">
    <property type="entry name" value="Trigger_N"/>
    <property type="match status" value="1"/>
</dbReference>
<dbReference type="PIRSF" id="PIRSF003095">
    <property type="entry name" value="Trigger_factor"/>
    <property type="match status" value="1"/>
</dbReference>
<dbReference type="SUPFAM" id="SSF54534">
    <property type="entry name" value="FKBP-like"/>
    <property type="match status" value="1"/>
</dbReference>
<dbReference type="SUPFAM" id="SSF109998">
    <property type="entry name" value="Triger factor/SurA peptide-binding domain-like"/>
    <property type="match status" value="1"/>
</dbReference>
<dbReference type="SUPFAM" id="SSF102735">
    <property type="entry name" value="Trigger factor ribosome-binding domain"/>
    <property type="match status" value="1"/>
</dbReference>
<dbReference type="PROSITE" id="PS50059">
    <property type="entry name" value="FKBP_PPIASE"/>
    <property type="match status" value="1"/>
</dbReference>
<name>TIG_LISMC</name>
<organism>
    <name type="scientific">Listeria monocytogenes serotype 4b (strain CLIP80459)</name>
    <dbReference type="NCBI Taxonomy" id="568819"/>
    <lineage>
        <taxon>Bacteria</taxon>
        <taxon>Bacillati</taxon>
        <taxon>Bacillota</taxon>
        <taxon>Bacilli</taxon>
        <taxon>Bacillales</taxon>
        <taxon>Listeriaceae</taxon>
        <taxon>Listeria</taxon>
    </lineage>
</organism>
<gene>
    <name evidence="1" type="primary">tig</name>
    <name type="ordered locus">Lm4b_01277</name>
</gene>
<comment type="function">
    <text evidence="1">Involved in protein export. Acts as a chaperone by maintaining the newly synthesized protein in an open conformation. Functions as a peptidyl-prolyl cis-trans isomerase.</text>
</comment>
<comment type="catalytic activity">
    <reaction evidence="1">
        <text>[protein]-peptidylproline (omega=180) = [protein]-peptidylproline (omega=0)</text>
        <dbReference type="Rhea" id="RHEA:16237"/>
        <dbReference type="Rhea" id="RHEA-COMP:10747"/>
        <dbReference type="Rhea" id="RHEA-COMP:10748"/>
        <dbReference type="ChEBI" id="CHEBI:83833"/>
        <dbReference type="ChEBI" id="CHEBI:83834"/>
        <dbReference type="EC" id="5.2.1.8"/>
    </reaction>
</comment>
<comment type="subcellular location">
    <subcellularLocation>
        <location>Cytoplasm</location>
    </subcellularLocation>
    <text evidence="1">About half TF is bound to the ribosome near the polypeptide exit tunnel while the other half is free in the cytoplasm.</text>
</comment>
<comment type="domain">
    <text evidence="1">Consists of 3 domains; the N-terminus binds the ribosome, the middle domain has PPIase activity, while the C-terminus has intrinsic chaperone activity on its own.</text>
</comment>
<comment type="similarity">
    <text evidence="1">Belongs to the FKBP-type PPIase family. Tig subfamily.</text>
</comment>
<accession>C1L2H5</accession>
<keyword id="KW-0131">Cell cycle</keyword>
<keyword id="KW-0132">Cell division</keyword>
<keyword id="KW-0143">Chaperone</keyword>
<keyword id="KW-0963">Cytoplasm</keyword>
<keyword id="KW-0413">Isomerase</keyword>
<keyword id="KW-0697">Rotamase</keyword>